<evidence type="ECO:0000250" key="1"/>
<evidence type="ECO:0000269" key="2">
    <source>
    </source>
</evidence>
<evidence type="ECO:0000303" key="3">
    <source>
    </source>
</evidence>
<evidence type="ECO:0000305" key="4"/>
<name>DAPE_ECOLI</name>
<feature type="chain" id="PRO_0000185261" description="Succinyl-diaminopimelate desuccinylase">
    <location>
        <begin position="1"/>
        <end position="375"/>
    </location>
</feature>
<feature type="active site" evidence="1">
    <location>
        <position position="68"/>
    </location>
</feature>
<feature type="active site" description="Proton acceptor" evidence="1">
    <location>
        <position position="133"/>
    </location>
</feature>
<feature type="binding site" evidence="1">
    <location>
        <position position="66"/>
    </location>
    <ligand>
        <name>Zn(2+)</name>
        <dbReference type="ChEBI" id="CHEBI:29105"/>
        <label>1</label>
    </ligand>
</feature>
<feature type="binding site" evidence="1">
    <location>
        <position position="99"/>
    </location>
    <ligand>
        <name>Zn(2+)</name>
        <dbReference type="ChEBI" id="CHEBI:29105"/>
        <label>1</label>
    </ligand>
</feature>
<feature type="binding site" evidence="1">
    <location>
        <position position="99"/>
    </location>
    <ligand>
        <name>Zn(2+)</name>
        <dbReference type="ChEBI" id="CHEBI:29105"/>
        <label>2</label>
    </ligand>
</feature>
<feature type="binding site" evidence="1">
    <location>
        <position position="134"/>
    </location>
    <ligand>
        <name>Zn(2+)</name>
        <dbReference type="ChEBI" id="CHEBI:29105"/>
        <label>2</label>
    </ligand>
</feature>
<feature type="binding site" evidence="1">
    <location>
        <position position="162"/>
    </location>
    <ligand>
        <name>Zn(2+)</name>
        <dbReference type="ChEBI" id="CHEBI:29105"/>
        <label>1</label>
    </ligand>
</feature>
<feature type="binding site" evidence="1">
    <location>
        <position position="348"/>
    </location>
    <ligand>
        <name>Zn(2+)</name>
        <dbReference type="ChEBI" id="CHEBI:29105"/>
        <label>2</label>
    </ligand>
</feature>
<protein>
    <recommendedName>
        <fullName>Succinyl-diaminopimelate desuccinylase</fullName>
        <shortName evidence="3">SDAP desuccinylase</shortName>
        <ecNumber evidence="2">3.5.1.18</ecNumber>
    </recommendedName>
    <alternativeName>
        <fullName>N-succinyl-LL-2,6-diaminoheptanedioate amidohydrolase</fullName>
    </alternativeName>
</protein>
<dbReference type="EC" id="3.5.1.18" evidence="2"/>
<dbReference type="EMBL" id="S41760">
    <property type="protein sequence ID" value="AAB22798.1"/>
    <property type="molecule type" value="Genomic_DNA"/>
</dbReference>
<dbReference type="EMBL" id="X57403">
    <property type="protein sequence ID" value="CAA40665.1"/>
    <property type="molecule type" value="Genomic_DNA"/>
</dbReference>
<dbReference type="EMBL" id="U00096">
    <property type="protein sequence ID" value="AAC75525.1"/>
    <property type="molecule type" value="Genomic_DNA"/>
</dbReference>
<dbReference type="EMBL" id="AP009048">
    <property type="protein sequence ID" value="BAA16346.1"/>
    <property type="molecule type" value="Genomic_DNA"/>
</dbReference>
<dbReference type="PIR" id="A42959">
    <property type="entry name" value="A42959"/>
</dbReference>
<dbReference type="RefSeq" id="NP_416967.1">
    <property type="nucleotide sequence ID" value="NC_000913.3"/>
</dbReference>
<dbReference type="RefSeq" id="WP_001277801.1">
    <property type="nucleotide sequence ID" value="NZ_STEB01000051.1"/>
</dbReference>
<dbReference type="SMR" id="P0AED7"/>
<dbReference type="BioGRID" id="4261716">
    <property type="interactions" value="7"/>
</dbReference>
<dbReference type="BioGRID" id="852610">
    <property type="interactions" value="3"/>
</dbReference>
<dbReference type="FunCoup" id="P0AED7">
    <property type="interactions" value="624"/>
</dbReference>
<dbReference type="IntAct" id="P0AED7">
    <property type="interactions" value="6"/>
</dbReference>
<dbReference type="STRING" id="511145.b2472"/>
<dbReference type="MEROPS" id="M20.010"/>
<dbReference type="jPOST" id="P0AED7"/>
<dbReference type="PaxDb" id="511145-b2472"/>
<dbReference type="EnsemblBacteria" id="AAC75525">
    <property type="protein sequence ID" value="AAC75525"/>
    <property type="gene ID" value="b2472"/>
</dbReference>
<dbReference type="GeneID" id="948313"/>
<dbReference type="KEGG" id="ecj:JW2456"/>
<dbReference type="KEGG" id="eco:b2472"/>
<dbReference type="KEGG" id="ecoc:C3026_13715"/>
<dbReference type="PATRIC" id="fig|1411691.4.peg.4268"/>
<dbReference type="EchoBASE" id="EB0204"/>
<dbReference type="eggNOG" id="COG0624">
    <property type="taxonomic scope" value="Bacteria"/>
</dbReference>
<dbReference type="HOGENOM" id="CLU_021802_4_0_6"/>
<dbReference type="InParanoid" id="P0AED7"/>
<dbReference type="OMA" id="PKYGWTD"/>
<dbReference type="OrthoDB" id="9809784at2"/>
<dbReference type="PhylomeDB" id="P0AED7"/>
<dbReference type="BioCyc" id="EcoCyc:MONOMER0-1981"/>
<dbReference type="BioCyc" id="MetaCyc:MONOMER0-1981"/>
<dbReference type="SABIO-RK" id="P0AED7"/>
<dbReference type="UniPathway" id="UPA00034">
    <property type="reaction ID" value="UER00021"/>
</dbReference>
<dbReference type="PRO" id="PR:P0AED7"/>
<dbReference type="Proteomes" id="UP000000625">
    <property type="component" value="Chromosome"/>
</dbReference>
<dbReference type="GO" id="GO:0032153">
    <property type="term" value="C:cell division site"/>
    <property type="evidence" value="ECO:0000314"/>
    <property type="project" value="EcoCyc"/>
</dbReference>
<dbReference type="GO" id="GO:0005829">
    <property type="term" value="C:cytosol"/>
    <property type="evidence" value="ECO:0000314"/>
    <property type="project" value="EcoCyc"/>
</dbReference>
<dbReference type="GO" id="GO:0050897">
    <property type="term" value="F:cobalt ion binding"/>
    <property type="evidence" value="ECO:0000314"/>
    <property type="project" value="EcoCyc"/>
</dbReference>
<dbReference type="GO" id="GO:0042802">
    <property type="term" value="F:identical protein binding"/>
    <property type="evidence" value="ECO:0000314"/>
    <property type="project" value="EcoCyc"/>
</dbReference>
<dbReference type="GO" id="GO:0009014">
    <property type="term" value="F:succinyl-diaminopimelate desuccinylase activity"/>
    <property type="evidence" value="ECO:0000314"/>
    <property type="project" value="EcoCyc"/>
</dbReference>
<dbReference type="GO" id="GO:0008270">
    <property type="term" value="F:zinc ion binding"/>
    <property type="evidence" value="ECO:0000314"/>
    <property type="project" value="EcoCyc"/>
</dbReference>
<dbReference type="GO" id="GO:0019877">
    <property type="term" value="P:diaminopimelate biosynthetic process"/>
    <property type="evidence" value="ECO:0007669"/>
    <property type="project" value="UniProtKB-UniRule"/>
</dbReference>
<dbReference type="GO" id="GO:0043093">
    <property type="term" value="P:FtsZ-dependent cytokinesis"/>
    <property type="evidence" value="ECO:0000269"/>
    <property type="project" value="EcoCyc"/>
</dbReference>
<dbReference type="GO" id="GO:0009089">
    <property type="term" value="P:lysine biosynthetic process via diaminopimelate"/>
    <property type="evidence" value="ECO:0000315"/>
    <property type="project" value="EcoCyc"/>
</dbReference>
<dbReference type="CDD" id="cd03891">
    <property type="entry name" value="M20_DapE_proteobac"/>
    <property type="match status" value="1"/>
</dbReference>
<dbReference type="FunFam" id="3.30.70.360:FF:000011">
    <property type="entry name" value="Succinyl-diaminopimelate desuccinylase"/>
    <property type="match status" value="1"/>
</dbReference>
<dbReference type="FunFam" id="3.40.630.10:FF:000005">
    <property type="entry name" value="Succinyl-diaminopimelate desuccinylase"/>
    <property type="match status" value="1"/>
</dbReference>
<dbReference type="FunFam" id="3.40.630.10:FF:000010">
    <property type="entry name" value="Succinyl-diaminopimelate desuccinylase"/>
    <property type="match status" value="1"/>
</dbReference>
<dbReference type="Gene3D" id="3.40.630.10">
    <property type="entry name" value="Zn peptidases"/>
    <property type="match status" value="2"/>
</dbReference>
<dbReference type="HAMAP" id="MF_01690">
    <property type="entry name" value="DapE"/>
    <property type="match status" value="1"/>
</dbReference>
<dbReference type="InterPro" id="IPR001261">
    <property type="entry name" value="ArgE/DapE_CS"/>
</dbReference>
<dbReference type="InterPro" id="IPR036264">
    <property type="entry name" value="Bact_exopeptidase_dim_dom"/>
</dbReference>
<dbReference type="InterPro" id="IPR005941">
    <property type="entry name" value="DapE_proteobac"/>
</dbReference>
<dbReference type="InterPro" id="IPR002933">
    <property type="entry name" value="Peptidase_M20"/>
</dbReference>
<dbReference type="InterPro" id="IPR011650">
    <property type="entry name" value="Peptidase_M20_dimer"/>
</dbReference>
<dbReference type="InterPro" id="IPR050072">
    <property type="entry name" value="Peptidase_M20A"/>
</dbReference>
<dbReference type="NCBIfam" id="TIGR01246">
    <property type="entry name" value="dapE_proteo"/>
    <property type="match status" value="1"/>
</dbReference>
<dbReference type="NCBIfam" id="NF009557">
    <property type="entry name" value="PRK13009.1"/>
    <property type="match status" value="1"/>
</dbReference>
<dbReference type="PANTHER" id="PTHR43808">
    <property type="entry name" value="ACETYLORNITHINE DEACETYLASE"/>
    <property type="match status" value="1"/>
</dbReference>
<dbReference type="PANTHER" id="PTHR43808:SF31">
    <property type="entry name" value="N-ACETYL-L-CITRULLINE DEACETYLASE"/>
    <property type="match status" value="1"/>
</dbReference>
<dbReference type="Pfam" id="PF07687">
    <property type="entry name" value="M20_dimer"/>
    <property type="match status" value="1"/>
</dbReference>
<dbReference type="Pfam" id="PF01546">
    <property type="entry name" value="Peptidase_M20"/>
    <property type="match status" value="1"/>
</dbReference>
<dbReference type="SUPFAM" id="SSF55031">
    <property type="entry name" value="Bacterial exopeptidase dimerisation domain"/>
    <property type="match status" value="1"/>
</dbReference>
<dbReference type="SUPFAM" id="SSF53187">
    <property type="entry name" value="Zn-dependent exopeptidases"/>
    <property type="match status" value="1"/>
</dbReference>
<dbReference type="PROSITE" id="PS00758">
    <property type="entry name" value="ARGE_DAPE_CPG2_1"/>
    <property type="match status" value="1"/>
</dbReference>
<dbReference type="PROSITE" id="PS00759">
    <property type="entry name" value="ARGE_DAPE_CPG2_2"/>
    <property type="match status" value="1"/>
</dbReference>
<reference key="1">
    <citation type="journal article" date="1992" name="J. Bacteriol.">
        <title>Cloning, characterization, and expression of the dapE gene of Escherichia coli.</title>
        <authorList>
            <person name="Bouvier J."/>
            <person name="Richaud C."/>
            <person name="Higgins W."/>
            <person name="Bogler O."/>
            <person name="Stragier S."/>
        </authorList>
    </citation>
    <scope>NUCLEOTIDE SEQUENCE [GENOMIC DNA]</scope>
    <source>
        <strain>K12</strain>
    </source>
</reference>
<reference key="2">
    <citation type="journal article" date="1992" name="J. Bacteriol.">
        <title>The essential Escherichia coli msgB gene, a multicopy suppressor of a temperature-sensitive allele of the heat shock gene grpE, is identical to dapE.</title>
        <authorList>
            <person name="Wu B."/>
            <person name="Georgopoulos C."/>
            <person name="Ang D."/>
        </authorList>
    </citation>
    <scope>NUCLEOTIDE SEQUENCE [GENOMIC DNA]</scope>
</reference>
<reference key="3">
    <citation type="journal article" date="1997" name="DNA Res.">
        <title>Construction of a contiguous 874-kb sequence of the Escherichia coli-K12 genome corresponding to 50.0-68.8 min on the linkage map and analysis of its sequence features.</title>
        <authorList>
            <person name="Yamamoto Y."/>
            <person name="Aiba H."/>
            <person name="Baba T."/>
            <person name="Hayashi K."/>
            <person name="Inada T."/>
            <person name="Isono K."/>
            <person name="Itoh T."/>
            <person name="Kimura S."/>
            <person name="Kitagawa M."/>
            <person name="Makino K."/>
            <person name="Miki T."/>
            <person name="Mitsuhashi N."/>
            <person name="Mizobuchi K."/>
            <person name="Mori H."/>
            <person name="Nakade S."/>
            <person name="Nakamura Y."/>
            <person name="Nashimoto H."/>
            <person name="Oshima T."/>
            <person name="Oyama S."/>
            <person name="Saito N."/>
            <person name="Sampei G."/>
            <person name="Satoh Y."/>
            <person name="Sivasundaram S."/>
            <person name="Tagami H."/>
            <person name="Takahashi H."/>
            <person name="Takeda J."/>
            <person name="Takemoto K."/>
            <person name="Uehara K."/>
            <person name="Wada C."/>
            <person name="Yamagata S."/>
            <person name="Horiuchi T."/>
        </authorList>
    </citation>
    <scope>NUCLEOTIDE SEQUENCE [LARGE SCALE GENOMIC DNA]</scope>
    <source>
        <strain>K12 / W3110 / ATCC 27325 / DSM 5911</strain>
    </source>
</reference>
<reference key="4">
    <citation type="journal article" date="1997" name="Science">
        <title>The complete genome sequence of Escherichia coli K-12.</title>
        <authorList>
            <person name="Blattner F.R."/>
            <person name="Plunkett G. III"/>
            <person name="Bloch C.A."/>
            <person name="Perna N.T."/>
            <person name="Burland V."/>
            <person name="Riley M."/>
            <person name="Collado-Vides J."/>
            <person name="Glasner J.D."/>
            <person name="Rode C.K."/>
            <person name="Mayhew G.F."/>
            <person name="Gregor J."/>
            <person name="Davis N.W."/>
            <person name="Kirkpatrick H.A."/>
            <person name="Goeden M.A."/>
            <person name="Rose D.J."/>
            <person name="Mau B."/>
            <person name="Shao Y."/>
        </authorList>
    </citation>
    <scope>NUCLEOTIDE SEQUENCE [LARGE SCALE GENOMIC DNA]</scope>
    <source>
        <strain>K12 / MG1655 / ATCC 47076</strain>
    </source>
</reference>
<reference key="5">
    <citation type="journal article" date="2006" name="Mol. Syst. Biol.">
        <title>Highly accurate genome sequences of Escherichia coli K-12 strains MG1655 and W3110.</title>
        <authorList>
            <person name="Hayashi K."/>
            <person name="Morooka N."/>
            <person name="Yamamoto Y."/>
            <person name="Fujita K."/>
            <person name="Isono K."/>
            <person name="Choi S."/>
            <person name="Ohtsubo E."/>
            <person name="Baba T."/>
            <person name="Wanner B.L."/>
            <person name="Mori H."/>
            <person name="Horiuchi T."/>
        </authorList>
    </citation>
    <scope>NUCLEOTIDE SEQUENCE [LARGE SCALE GENOMIC DNA]</scope>
    <source>
        <strain>K12 / W3110 / ATCC 27325 / DSM 5911</strain>
    </source>
</reference>
<reference key="6">
    <citation type="journal article" date="1988" name="J. Biol. Chem.">
        <title>Bacterial N-succinyl-L-diaminopimelic acid desuccinylase. Purification, partial characterization, and substrate specificity.</title>
        <authorList>
            <person name="Lin Y.K."/>
            <person name="Myhrman R."/>
            <person name="Schrag M.L."/>
            <person name="Gelb M.H."/>
        </authorList>
    </citation>
    <scope>FUNCTION</scope>
    <scope>SUBUNIT</scope>
    <scope>COFACTOR</scope>
    <scope>BIOPHYSICOCHEMICAL PROPERTIES</scope>
    <scope>CATALYTIC ACTIVITY</scope>
</reference>
<gene>
    <name type="primary">dapE</name>
    <name type="synonym">msgB</name>
    <name type="ordered locus">b2472</name>
    <name type="ordered locus">JW2456</name>
</gene>
<keyword id="KW-0028">Amino-acid biosynthesis</keyword>
<keyword id="KW-0170">Cobalt</keyword>
<keyword id="KW-0220">Diaminopimelate biosynthesis</keyword>
<keyword id="KW-0378">Hydrolase</keyword>
<keyword id="KW-0457">Lysine biosynthesis</keyword>
<keyword id="KW-0479">Metal-binding</keyword>
<keyword id="KW-1185">Reference proteome</keyword>
<keyword id="KW-0862">Zinc</keyword>
<organism>
    <name type="scientific">Escherichia coli (strain K12)</name>
    <dbReference type="NCBI Taxonomy" id="83333"/>
    <lineage>
        <taxon>Bacteria</taxon>
        <taxon>Pseudomonadati</taxon>
        <taxon>Pseudomonadota</taxon>
        <taxon>Gammaproteobacteria</taxon>
        <taxon>Enterobacterales</taxon>
        <taxon>Enterobacteriaceae</taxon>
        <taxon>Escherichia</taxon>
    </lineage>
</organism>
<accession>P0AED7</accession>
<accession>P24176</accession>
<proteinExistence type="evidence at protein level"/>
<comment type="function">
    <text evidence="2">Catalyzes the hydrolysis of N-succinyl-L,L-diaminopimelic acid (SDAP), forming succinate and LL-2,6-diaminopimelate (DAP), an intermediate involved in the bacterial biosynthesis of lysine and meso-diaminopimelic acid, an essential component of bacterial cell walls.</text>
</comment>
<comment type="catalytic activity">
    <reaction evidence="2">
        <text>N-succinyl-(2S,6S)-2,6-diaminopimelate + H2O = (2S,6S)-2,6-diaminopimelate + succinate</text>
        <dbReference type="Rhea" id="RHEA:22608"/>
        <dbReference type="ChEBI" id="CHEBI:15377"/>
        <dbReference type="ChEBI" id="CHEBI:30031"/>
        <dbReference type="ChEBI" id="CHEBI:57609"/>
        <dbReference type="ChEBI" id="CHEBI:58087"/>
        <dbReference type="EC" id="3.5.1.18"/>
    </reaction>
</comment>
<comment type="cofactor">
    <cofactor evidence="2">
        <name>Zn(2+)</name>
        <dbReference type="ChEBI" id="CHEBI:29105"/>
    </cofactor>
    <cofactor evidence="2">
        <name>Co(2+)</name>
        <dbReference type="ChEBI" id="CHEBI:48828"/>
    </cofactor>
    <text evidence="2">Binds 2 Zn(2+) or Co(2+) ions per subunit.</text>
</comment>
<comment type="biophysicochemical properties">
    <kinetics>
        <KM evidence="2">0.41 mM for L,L-SDAP (in the presence of Zn(2+) at pH 7.0)</KM>
    </kinetics>
</comment>
<comment type="pathway">
    <text>Amino-acid biosynthesis; L-lysine biosynthesis via DAP pathway; LL-2,6-diaminopimelate from (S)-tetrahydrodipicolinate (succinylase route): step 3/3.</text>
</comment>
<comment type="subunit">
    <text evidence="2">Homodimer.</text>
</comment>
<comment type="miscellaneous">
    <text>DapE/msgB is a multicopy suppressor of a temperature-sensitive allele of the heat shock gene grpE.</text>
</comment>
<comment type="similarity">
    <text evidence="4">Belongs to the peptidase M20A family. DapE subfamily.</text>
</comment>
<sequence>MSCPVIELTQQLIRRPSLSPDDAGCQALLIERLQAIGFTVERMDFADTQNFWAWRGQGETLAFAGHTDVVPPGDADRWINPPFEPTIRDGMLFGRGAADMKGSLAAMVVAAERFVAQHPNHTGRLAFLITSDEEASAHNGTVKVVEALMARNERLDYCLVGEPSSIEVVGDVVKNGRRGSLTCNLTIHGVQGHVAYPHLADNPVHRAAPFLNELVAIEWDQGNEFFPATSMQIANIQAGTGSNNVIPGELFVQFNFRFSTELTDEMIKAQVLALLEKHQLRYTVDWWLSGQPFLTARGKLVDAVVNAVEHYNEIKPQLLTTGGTSDGRFIARMGAQVVELGPVNATIHKINECVNAADLQLLARMYQRIMEQLVA</sequence>